<evidence type="ECO:0000255" key="1">
    <source>
        <dbReference type="HAMAP-Rule" id="MF_01720"/>
    </source>
</evidence>
<proteinExistence type="inferred from homology"/>
<feature type="chain" id="PRO_0000269971" description="Macrolide export ATP-binding/permease protein MacB">
    <location>
        <begin position="1"/>
        <end position="655"/>
    </location>
</feature>
<feature type="transmembrane region" description="Helical" evidence="1">
    <location>
        <begin position="279"/>
        <end position="299"/>
    </location>
</feature>
<feature type="transmembrane region" description="Helical" evidence="1">
    <location>
        <begin position="528"/>
        <end position="548"/>
    </location>
</feature>
<feature type="transmembrane region" description="Helical" evidence="1">
    <location>
        <begin position="579"/>
        <end position="599"/>
    </location>
</feature>
<feature type="transmembrane region" description="Helical" evidence="1">
    <location>
        <begin position="618"/>
        <end position="638"/>
    </location>
</feature>
<feature type="domain" description="ABC transporter" evidence="1">
    <location>
        <begin position="6"/>
        <end position="244"/>
    </location>
</feature>
<feature type="binding site" evidence="1">
    <location>
        <begin position="42"/>
        <end position="49"/>
    </location>
    <ligand>
        <name>ATP</name>
        <dbReference type="ChEBI" id="CHEBI:30616"/>
    </ligand>
</feature>
<name>MACB_RHOPB</name>
<sequence length="655" mass="70001">MARSTIVLRGLRREYPSGEATVVALRDLDLTIEPGEMVAVMGASGSGKSTLMNILGCLDRPSSGSYQIAGRETASLDADELAALRREHFGFIFQRYHLLPELSALSNVEIPAIYAGQSRDERRDRANGLLARLGITDRASHRPNQLSGGQQQRVSIARALMNGADVILADEPTGALDRRSGDEVLRILDELHADGKTVIIVTHDASVAARAKRVIELSDGVVIADRATSTVSPAVAAPTAAAAQAQPRSRWPWQSRLDRIGEAFRMAMLAMAAHRLRTFLTMLGIIIGIASVVFIVAVGDAAKRKVLADISSLGTNTIEIFPGKDLGDVRSSKIKTLVVADARALRLQPYIDGVTPTVSTSSTLRHGPLEANALVNGVGDQYFAVKGTKLSAGRFFDADGLRDVSQDVVIDEKTRQTFFSDDPDGPIGKVLLVGRVPCRIIGVTQQQQGGFGSSQNLSVYLPYTTVQARFLGNSSLRSILVKVNDEVTTKAAELDVTRFLTLRHRVKDFVILNTDDIRKTITNTTETLTLMIAAIAVISLVVGGIGVMNIMLVSVSERVGEIGVRMAVGARRSDILQQFLIEAVMVCLIGGGLGVAVAYGLAATFNALVPMFQLGLSAGSIIAAFICSTGIGVVFGYLPARQASFLDPLAALSRD</sequence>
<organism>
    <name type="scientific">Rhodopseudomonas palustris (strain BisB18)</name>
    <dbReference type="NCBI Taxonomy" id="316056"/>
    <lineage>
        <taxon>Bacteria</taxon>
        <taxon>Pseudomonadati</taxon>
        <taxon>Pseudomonadota</taxon>
        <taxon>Alphaproteobacteria</taxon>
        <taxon>Hyphomicrobiales</taxon>
        <taxon>Nitrobacteraceae</taxon>
        <taxon>Rhodopseudomonas</taxon>
    </lineage>
</organism>
<gene>
    <name evidence="1" type="primary">macB</name>
    <name type="ordered locus">RPC_1867</name>
</gene>
<accession>Q217L2</accession>
<dbReference type="EC" id="7.6.2.-" evidence="1"/>
<dbReference type="EMBL" id="CP000301">
    <property type="protein sequence ID" value="ABD87424.1"/>
    <property type="molecule type" value="Genomic_DNA"/>
</dbReference>
<dbReference type="SMR" id="Q217L2"/>
<dbReference type="STRING" id="316056.RPC_1867"/>
<dbReference type="KEGG" id="rpc:RPC_1867"/>
<dbReference type="eggNOG" id="COG0577">
    <property type="taxonomic scope" value="Bacteria"/>
</dbReference>
<dbReference type="eggNOG" id="COG1136">
    <property type="taxonomic scope" value="Bacteria"/>
</dbReference>
<dbReference type="HOGENOM" id="CLU_000604_78_1_5"/>
<dbReference type="OrthoDB" id="9786950at2"/>
<dbReference type="GO" id="GO:0005886">
    <property type="term" value="C:plasma membrane"/>
    <property type="evidence" value="ECO:0007669"/>
    <property type="project" value="UniProtKB-SubCell"/>
</dbReference>
<dbReference type="GO" id="GO:0005524">
    <property type="term" value="F:ATP binding"/>
    <property type="evidence" value="ECO:0007669"/>
    <property type="project" value="UniProtKB-KW"/>
</dbReference>
<dbReference type="GO" id="GO:0016887">
    <property type="term" value="F:ATP hydrolysis activity"/>
    <property type="evidence" value="ECO:0007669"/>
    <property type="project" value="InterPro"/>
</dbReference>
<dbReference type="GO" id="GO:0022857">
    <property type="term" value="F:transmembrane transporter activity"/>
    <property type="evidence" value="ECO:0007669"/>
    <property type="project" value="TreeGrafter"/>
</dbReference>
<dbReference type="GO" id="GO:0046677">
    <property type="term" value="P:response to antibiotic"/>
    <property type="evidence" value="ECO:0007669"/>
    <property type="project" value="UniProtKB-KW"/>
</dbReference>
<dbReference type="CDD" id="cd03255">
    <property type="entry name" value="ABC_MJ0796_LolCDE_FtsE"/>
    <property type="match status" value="1"/>
</dbReference>
<dbReference type="FunFam" id="3.40.50.300:FF:000032">
    <property type="entry name" value="Export ABC transporter ATP-binding protein"/>
    <property type="match status" value="1"/>
</dbReference>
<dbReference type="Gene3D" id="3.40.50.300">
    <property type="entry name" value="P-loop containing nucleotide triphosphate hydrolases"/>
    <property type="match status" value="1"/>
</dbReference>
<dbReference type="InterPro" id="IPR003593">
    <property type="entry name" value="AAA+_ATPase"/>
</dbReference>
<dbReference type="InterPro" id="IPR003838">
    <property type="entry name" value="ABC3_permease_C"/>
</dbReference>
<dbReference type="InterPro" id="IPR003439">
    <property type="entry name" value="ABC_transporter-like_ATP-bd"/>
</dbReference>
<dbReference type="InterPro" id="IPR017871">
    <property type="entry name" value="ABC_transporter-like_CS"/>
</dbReference>
<dbReference type="InterPro" id="IPR017911">
    <property type="entry name" value="MacB-like_ATP-bd"/>
</dbReference>
<dbReference type="InterPro" id="IPR025857">
    <property type="entry name" value="MacB_PCD"/>
</dbReference>
<dbReference type="InterPro" id="IPR050250">
    <property type="entry name" value="Macrolide_Exporter_MacB"/>
</dbReference>
<dbReference type="InterPro" id="IPR027417">
    <property type="entry name" value="P-loop_NTPase"/>
</dbReference>
<dbReference type="PANTHER" id="PTHR30572:SF14">
    <property type="entry name" value="MACROLIDE EXPORT ATP-BINDING_PERMEASE PROTEIN MACB"/>
    <property type="match status" value="1"/>
</dbReference>
<dbReference type="PANTHER" id="PTHR30572">
    <property type="entry name" value="MEMBRANE COMPONENT OF TRANSPORTER-RELATED"/>
    <property type="match status" value="1"/>
</dbReference>
<dbReference type="Pfam" id="PF00005">
    <property type="entry name" value="ABC_tran"/>
    <property type="match status" value="1"/>
</dbReference>
<dbReference type="Pfam" id="PF02687">
    <property type="entry name" value="FtsX"/>
    <property type="match status" value="1"/>
</dbReference>
<dbReference type="Pfam" id="PF12704">
    <property type="entry name" value="MacB_PCD"/>
    <property type="match status" value="1"/>
</dbReference>
<dbReference type="SMART" id="SM00382">
    <property type="entry name" value="AAA"/>
    <property type="match status" value="1"/>
</dbReference>
<dbReference type="SUPFAM" id="SSF52540">
    <property type="entry name" value="P-loop containing nucleoside triphosphate hydrolases"/>
    <property type="match status" value="1"/>
</dbReference>
<dbReference type="PROSITE" id="PS00211">
    <property type="entry name" value="ABC_TRANSPORTER_1"/>
    <property type="match status" value="1"/>
</dbReference>
<dbReference type="PROSITE" id="PS50893">
    <property type="entry name" value="ABC_TRANSPORTER_2"/>
    <property type="match status" value="1"/>
</dbReference>
<dbReference type="PROSITE" id="PS51267">
    <property type="entry name" value="MACB"/>
    <property type="match status" value="1"/>
</dbReference>
<protein>
    <recommendedName>
        <fullName evidence="1">Macrolide export ATP-binding/permease protein MacB</fullName>
        <ecNumber evidence="1">7.6.2.-</ecNumber>
    </recommendedName>
</protein>
<keyword id="KW-0046">Antibiotic resistance</keyword>
<keyword id="KW-0067">ATP-binding</keyword>
<keyword id="KW-0997">Cell inner membrane</keyword>
<keyword id="KW-1003">Cell membrane</keyword>
<keyword id="KW-0472">Membrane</keyword>
<keyword id="KW-0547">Nucleotide-binding</keyword>
<keyword id="KW-1278">Translocase</keyword>
<keyword id="KW-0812">Transmembrane</keyword>
<keyword id="KW-1133">Transmembrane helix</keyword>
<keyword id="KW-0813">Transport</keyword>
<reference key="1">
    <citation type="submission" date="2006-03" db="EMBL/GenBank/DDBJ databases">
        <title>Complete sequence of Rhodopseudomonas palustris BisB18.</title>
        <authorList>
            <consortium name="US DOE Joint Genome Institute"/>
            <person name="Copeland A."/>
            <person name="Lucas S."/>
            <person name="Lapidus A."/>
            <person name="Barry K."/>
            <person name="Detter J.C."/>
            <person name="Glavina del Rio T."/>
            <person name="Hammon N."/>
            <person name="Israni S."/>
            <person name="Dalin E."/>
            <person name="Tice H."/>
            <person name="Pitluck S."/>
            <person name="Chain P."/>
            <person name="Malfatti S."/>
            <person name="Shin M."/>
            <person name="Vergez L."/>
            <person name="Schmutz J."/>
            <person name="Larimer F."/>
            <person name="Land M."/>
            <person name="Hauser L."/>
            <person name="Pelletier D.A."/>
            <person name="Kyrpides N."/>
            <person name="Anderson I."/>
            <person name="Oda Y."/>
            <person name="Harwood C.S."/>
            <person name="Richardson P."/>
        </authorList>
    </citation>
    <scope>NUCLEOTIDE SEQUENCE [LARGE SCALE GENOMIC DNA]</scope>
    <source>
        <strain>BisB18</strain>
    </source>
</reference>
<comment type="function">
    <text evidence="1">Non-canonical ABC transporter that contains transmembrane domains (TMD), which form a pore in the inner membrane, and an ATP-binding domain (NBD), which is responsible for energy generation. Confers resistance against macrolides.</text>
</comment>
<comment type="subunit">
    <text evidence="1">Homodimer.</text>
</comment>
<comment type="subcellular location">
    <subcellularLocation>
        <location evidence="1">Cell inner membrane</location>
        <topology evidence="1">Multi-pass membrane protein</topology>
    </subcellularLocation>
</comment>
<comment type="similarity">
    <text evidence="1">Belongs to the ABC transporter superfamily. Macrolide exporter (TC 3.A.1.122) family.</text>
</comment>